<dbReference type="EMBL" id="CP000473">
    <property type="protein sequence ID" value="ABJ86056.1"/>
    <property type="molecule type" value="Genomic_DNA"/>
</dbReference>
<dbReference type="SMR" id="Q01WA9"/>
<dbReference type="FunCoup" id="Q01WA9">
    <property type="interactions" value="779"/>
</dbReference>
<dbReference type="STRING" id="234267.Acid_5101"/>
<dbReference type="KEGG" id="sus:Acid_5101"/>
<dbReference type="eggNOG" id="COG0098">
    <property type="taxonomic scope" value="Bacteria"/>
</dbReference>
<dbReference type="HOGENOM" id="CLU_065898_2_2_0"/>
<dbReference type="InParanoid" id="Q01WA9"/>
<dbReference type="OrthoDB" id="9809045at2"/>
<dbReference type="GO" id="GO:0015935">
    <property type="term" value="C:small ribosomal subunit"/>
    <property type="evidence" value="ECO:0007669"/>
    <property type="project" value="InterPro"/>
</dbReference>
<dbReference type="GO" id="GO:0019843">
    <property type="term" value="F:rRNA binding"/>
    <property type="evidence" value="ECO:0007669"/>
    <property type="project" value="UniProtKB-UniRule"/>
</dbReference>
<dbReference type="GO" id="GO:0003735">
    <property type="term" value="F:structural constituent of ribosome"/>
    <property type="evidence" value="ECO:0007669"/>
    <property type="project" value="InterPro"/>
</dbReference>
<dbReference type="GO" id="GO:0006412">
    <property type="term" value="P:translation"/>
    <property type="evidence" value="ECO:0007669"/>
    <property type="project" value="UniProtKB-UniRule"/>
</dbReference>
<dbReference type="FunFam" id="3.30.160.20:FF:000001">
    <property type="entry name" value="30S ribosomal protein S5"/>
    <property type="match status" value="1"/>
</dbReference>
<dbReference type="FunFam" id="3.30.230.10:FF:000002">
    <property type="entry name" value="30S ribosomal protein S5"/>
    <property type="match status" value="1"/>
</dbReference>
<dbReference type="Gene3D" id="3.30.160.20">
    <property type="match status" value="1"/>
</dbReference>
<dbReference type="Gene3D" id="3.30.230.10">
    <property type="match status" value="1"/>
</dbReference>
<dbReference type="HAMAP" id="MF_01307_B">
    <property type="entry name" value="Ribosomal_uS5_B"/>
    <property type="match status" value="1"/>
</dbReference>
<dbReference type="InterPro" id="IPR020568">
    <property type="entry name" value="Ribosomal_Su5_D2-typ_SF"/>
</dbReference>
<dbReference type="InterPro" id="IPR000851">
    <property type="entry name" value="Ribosomal_uS5"/>
</dbReference>
<dbReference type="InterPro" id="IPR005712">
    <property type="entry name" value="Ribosomal_uS5_bac-type"/>
</dbReference>
<dbReference type="InterPro" id="IPR005324">
    <property type="entry name" value="Ribosomal_uS5_C"/>
</dbReference>
<dbReference type="InterPro" id="IPR013810">
    <property type="entry name" value="Ribosomal_uS5_N"/>
</dbReference>
<dbReference type="InterPro" id="IPR014721">
    <property type="entry name" value="Ribsml_uS5_D2-typ_fold_subgr"/>
</dbReference>
<dbReference type="NCBIfam" id="TIGR01021">
    <property type="entry name" value="rpsE_bact"/>
    <property type="match status" value="1"/>
</dbReference>
<dbReference type="PANTHER" id="PTHR48432">
    <property type="entry name" value="S5 DRBM DOMAIN-CONTAINING PROTEIN"/>
    <property type="match status" value="1"/>
</dbReference>
<dbReference type="PANTHER" id="PTHR48432:SF1">
    <property type="entry name" value="S5 DRBM DOMAIN-CONTAINING PROTEIN"/>
    <property type="match status" value="1"/>
</dbReference>
<dbReference type="Pfam" id="PF00333">
    <property type="entry name" value="Ribosomal_S5"/>
    <property type="match status" value="1"/>
</dbReference>
<dbReference type="Pfam" id="PF03719">
    <property type="entry name" value="Ribosomal_S5_C"/>
    <property type="match status" value="1"/>
</dbReference>
<dbReference type="SUPFAM" id="SSF54768">
    <property type="entry name" value="dsRNA-binding domain-like"/>
    <property type="match status" value="1"/>
</dbReference>
<dbReference type="SUPFAM" id="SSF54211">
    <property type="entry name" value="Ribosomal protein S5 domain 2-like"/>
    <property type="match status" value="1"/>
</dbReference>
<dbReference type="PROSITE" id="PS50881">
    <property type="entry name" value="S5_DSRBD"/>
    <property type="match status" value="1"/>
</dbReference>
<evidence type="ECO:0000255" key="1">
    <source>
        <dbReference type="HAMAP-Rule" id="MF_01307"/>
    </source>
</evidence>
<evidence type="ECO:0000305" key="2"/>
<name>RS5_SOLUE</name>
<sequence>MNTTVKRIDPASLNLKEQVVAINRVTKVVKGGKNLSFSALVVIGDPSAKVVGYGVGKAKEVPSAIRKGIEAAKKNLRRINSLDTTIPHQVLGVFASSQVLLKPASPGTGVIAGGAVRAVITACGVPNVLTKSIGRRNPHNVVKATIVALEMLRDRNTVAEMRGLAVEKL</sequence>
<feature type="chain" id="PRO_0000293201" description="Small ribosomal subunit protein uS5">
    <location>
        <begin position="1"/>
        <end position="169"/>
    </location>
</feature>
<feature type="domain" description="S5 DRBM" evidence="1">
    <location>
        <begin position="15"/>
        <end position="79"/>
    </location>
</feature>
<organism>
    <name type="scientific">Solibacter usitatus (strain Ellin6076)</name>
    <dbReference type="NCBI Taxonomy" id="234267"/>
    <lineage>
        <taxon>Bacteria</taxon>
        <taxon>Pseudomonadati</taxon>
        <taxon>Acidobacteriota</taxon>
        <taxon>Terriglobia</taxon>
        <taxon>Bryobacterales</taxon>
        <taxon>Solibacteraceae</taxon>
        <taxon>Candidatus Solibacter</taxon>
    </lineage>
</organism>
<reference key="1">
    <citation type="journal article" date="2009" name="Appl. Environ. Microbiol.">
        <title>Three genomes from the phylum Acidobacteria provide insight into the lifestyles of these microorganisms in soils.</title>
        <authorList>
            <person name="Ward N.L."/>
            <person name="Challacombe J.F."/>
            <person name="Janssen P.H."/>
            <person name="Henrissat B."/>
            <person name="Coutinho P.M."/>
            <person name="Wu M."/>
            <person name="Xie G."/>
            <person name="Haft D.H."/>
            <person name="Sait M."/>
            <person name="Badger J."/>
            <person name="Barabote R.D."/>
            <person name="Bradley B."/>
            <person name="Brettin T.S."/>
            <person name="Brinkac L.M."/>
            <person name="Bruce D."/>
            <person name="Creasy T."/>
            <person name="Daugherty S.C."/>
            <person name="Davidsen T.M."/>
            <person name="DeBoy R.T."/>
            <person name="Detter J.C."/>
            <person name="Dodson R.J."/>
            <person name="Durkin A.S."/>
            <person name="Ganapathy A."/>
            <person name="Gwinn-Giglio M."/>
            <person name="Han C.S."/>
            <person name="Khouri H."/>
            <person name="Kiss H."/>
            <person name="Kothari S.P."/>
            <person name="Madupu R."/>
            <person name="Nelson K.E."/>
            <person name="Nelson W.C."/>
            <person name="Paulsen I."/>
            <person name="Penn K."/>
            <person name="Ren Q."/>
            <person name="Rosovitz M.J."/>
            <person name="Selengut J.D."/>
            <person name="Shrivastava S."/>
            <person name="Sullivan S.A."/>
            <person name="Tapia R."/>
            <person name="Thompson L.S."/>
            <person name="Watkins K.L."/>
            <person name="Yang Q."/>
            <person name="Yu C."/>
            <person name="Zafar N."/>
            <person name="Zhou L."/>
            <person name="Kuske C.R."/>
        </authorList>
    </citation>
    <scope>NUCLEOTIDE SEQUENCE [LARGE SCALE GENOMIC DNA]</scope>
    <source>
        <strain>Ellin6076</strain>
    </source>
</reference>
<accession>Q01WA9</accession>
<protein>
    <recommendedName>
        <fullName evidence="1">Small ribosomal subunit protein uS5</fullName>
    </recommendedName>
    <alternativeName>
        <fullName evidence="2">30S ribosomal protein S5</fullName>
    </alternativeName>
</protein>
<proteinExistence type="inferred from homology"/>
<comment type="function">
    <text evidence="1">With S4 and S12 plays an important role in translational accuracy.</text>
</comment>
<comment type="function">
    <text evidence="1">Located at the back of the 30S subunit body where it stabilizes the conformation of the head with respect to the body.</text>
</comment>
<comment type="subunit">
    <text evidence="1">Part of the 30S ribosomal subunit. Contacts proteins S4 and S8.</text>
</comment>
<comment type="domain">
    <text>The N-terminal domain interacts with the head of the 30S subunit; the C-terminal domain interacts with the body and contacts protein S4. The interaction surface between S4 and S5 is involved in control of translational fidelity.</text>
</comment>
<comment type="similarity">
    <text evidence="1">Belongs to the universal ribosomal protein uS5 family.</text>
</comment>
<gene>
    <name evidence="1" type="primary">rpsE</name>
    <name type="ordered locus">Acid_5101</name>
</gene>
<keyword id="KW-0687">Ribonucleoprotein</keyword>
<keyword id="KW-0689">Ribosomal protein</keyword>
<keyword id="KW-0694">RNA-binding</keyword>
<keyword id="KW-0699">rRNA-binding</keyword>